<organism>
    <name type="scientific">Rattus norvegicus</name>
    <name type="common">Rat</name>
    <dbReference type="NCBI Taxonomy" id="10116"/>
    <lineage>
        <taxon>Eukaryota</taxon>
        <taxon>Metazoa</taxon>
        <taxon>Chordata</taxon>
        <taxon>Craniata</taxon>
        <taxon>Vertebrata</taxon>
        <taxon>Euteleostomi</taxon>
        <taxon>Mammalia</taxon>
        <taxon>Eutheria</taxon>
        <taxon>Euarchontoglires</taxon>
        <taxon>Glires</taxon>
        <taxon>Rodentia</taxon>
        <taxon>Myomorpha</taxon>
        <taxon>Muroidea</taxon>
        <taxon>Muridae</taxon>
        <taxon>Murinae</taxon>
        <taxon>Rattus</taxon>
    </lineage>
</organism>
<protein>
    <recommendedName>
        <fullName>Protein disulfide-isomerase</fullName>
        <shortName>PDI</shortName>
        <ecNumber evidence="2">5.3.4.1</ecNumber>
    </recommendedName>
    <alternativeName>
        <fullName>Cellular thyroid hormone-binding protein</fullName>
    </alternativeName>
    <alternativeName>
        <fullName>Prolyl 4-hydroxylase subunit beta</fullName>
    </alternativeName>
</protein>
<reference key="1">
    <citation type="journal article" date="1985" name="Nature">
        <title>Sequence of protein disulphide isomerase and implications of its relationship to thioredoxin.</title>
        <authorList>
            <person name="Edman J.C."/>
            <person name="Ellis L."/>
            <person name="Blacher R.W."/>
            <person name="Roth R.A."/>
            <person name="Rutter W.J."/>
        </authorList>
    </citation>
    <scope>NUCLEOTIDE SEQUENCE [MRNA]</scope>
    <source>
        <tissue>Liver</tissue>
    </source>
</reference>
<reference key="2">
    <citation type="journal article" date="2004" name="Genome Res.">
        <title>The status, quality, and expansion of the NIH full-length cDNA project: the Mammalian Gene Collection (MGC).</title>
        <authorList>
            <consortium name="The MGC Project Team"/>
        </authorList>
    </citation>
    <scope>NUCLEOTIDE SEQUENCE [LARGE SCALE MRNA]</scope>
    <source>
        <tissue>Prostate</tissue>
    </source>
</reference>
<reference key="3">
    <citation type="journal article" date="1993" name="Biochim. Biophys. Acta">
        <title>Identification of protein disulfide isomerase and calreticulin as autoimmune antigens in LEC strain of rats.</title>
        <authorList>
            <person name="Yokoi T."/>
            <person name="Nagayama S."/>
            <person name="Kajiwara R."/>
            <person name="Kawaguchi Y."/>
            <person name="Horiuchi R."/>
            <person name="Kamataki T."/>
        </authorList>
    </citation>
    <scope>PROTEIN SEQUENCE OF 20-34</scope>
    <source>
        <strain>LEC</strain>
        <tissue>Liver</tissue>
    </source>
</reference>
<reference key="4">
    <citation type="journal article" date="1988" name="Biochem. Biophys. Res. Commun.">
        <title>Nucleotide sequence of rat liver iodothyronine 5'-monodeiodinase (5' MD): its identity with the protein disulfide isomerase.</title>
        <authorList>
            <person name="Boado R.J."/>
            <person name="Campbell D.A."/>
            <person name="Chopra I.J."/>
        </authorList>
    </citation>
    <scope>NUCLEOTIDE SEQUENCE [MRNA] OF 28-509</scope>
    <source>
        <tissue>Liver</tissue>
    </source>
</reference>
<reference key="5">
    <citation type="journal article" date="1988" name="Endocrinology">
        <title>Enzyme binding-inhibiting assay for iodothyronine 5'-monodeiodinase (5'-MD) and its application to isolation of complementary deoxyribonucleic acid clones for the 5'-MD in rat liver.</title>
        <authorList>
            <person name="Boado R.J."/>
            <person name="Chopra I.J."/>
            <person name="Flink I.L."/>
            <person name="Campbell D.A."/>
        </authorList>
    </citation>
    <scope>NUCLEOTIDE SEQUENCE [MRNA] OF 129-394</scope>
    <source>
        <tissue>Liver</tissue>
    </source>
</reference>
<reference key="6">
    <citation type="submission" date="2007-04" db="UniProtKB">
        <authorList>
            <person name="Lubec G."/>
            <person name="Afjehi-Sadat L."/>
            <person name="Chen W.-Q."/>
        </authorList>
    </citation>
    <scope>PROTEIN SEQUENCE OF 233-249; 288-302 AND 341-352</scope>
    <scope>IDENTIFICATION BY MASS SPECTROMETRY</scope>
    <source>
        <strain>Sprague-Dawley</strain>
        <tissue>Hippocampus</tissue>
        <tissue>Spinal cord</tissue>
    </source>
</reference>
<reference key="7">
    <citation type="journal article" date="1993" name="J. Biol. Chem.">
        <title>Peptide binding to protein disulfide isomerase occurs at a site distinct from the active sites.</title>
        <authorList>
            <person name="Noiva R."/>
            <person name="Freedman R.B."/>
            <person name="Lennarz W.J."/>
        </authorList>
    </citation>
    <scope>PROTEIN SEQUENCE OF 471-494</scope>
</reference>
<reference key="8">
    <citation type="journal article" date="1989" name="Biochem. Biophys. Res. Commun.">
        <title>Rat liver type I iodothyronine deiodinase is not identical to protein disulfide isomerase.</title>
        <authorList>
            <person name="Schoenmakers C.H.H."/>
            <person name="Pigmans I.G.A.J."/>
            <person name="Hawkins H.C."/>
            <person name="Freedman R.B."/>
            <person name="Visser T.J."/>
        </authorList>
    </citation>
    <scope>SHOWS THAT PROTEIN IS NOT IDENTICAL TO THYROXINE DEIODINASE</scope>
</reference>
<name>PDIA1_RAT</name>
<sequence length="509" mass="56951">MLSRALLCLALAWAARVGADALEEEDNVLVLKKSNFAEALAAHNYLLVEFYAPWCGHCKALAPEYAKAAAKLKAEGSEIRLAKVDATEESDLAQQYGVRGYPTIKFFKNGDTASPKEYTAGREADDIVNWLKKRTGPAATTLSDTAAAESLVDSSEVTVIGFFKDAGSDSAKQFLLAAEAVDDIPFGITSNSDVFSKYQLDKDGVVLFKKFDEGRNNFEGEITKEKLLDFIKHNQLPLVIEFTEQTAPKIFGGEIKTHILLFLPKSVSDYDGKLSNFKKAAEGFKGKILFIFIDSDHTDNQRILEFFGLKKEECPAVRLITLEEEMTKYKPESDELTAEKITQFCHHFLEGKIKPHLMSQELPEDWDKQPVKVLVGKNFEEVAFDEKKNVFVEFYAPWCGHCKQLAPIWDKLGETYKDHENIVIAKMDSTANEVEAVKVHSFPTLKFFPASADRTVIDYNGERTLDGFKKFLESGGQDGAGDNDDLDLEEALEPDMEEDDDQKAVKDEL</sequence>
<feature type="signal peptide" evidence="5">
    <location>
        <begin position="1"/>
        <end position="19"/>
    </location>
</feature>
<feature type="chain" id="PRO_0000034199" description="Protein disulfide-isomerase">
    <location>
        <begin position="20"/>
        <end position="509"/>
    </location>
</feature>
<feature type="domain" description="Thioredoxin 1" evidence="4">
    <location>
        <begin position="20"/>
        <end position="136"/>
    </location>
</feature>
<feature type="domain" description="Thioredoxin 2" evidence="4">
    <location>
        <begin position="335"/>
        <end position="477"/>
    </location>
</feature>
<feature type="short sequence motif" description="Prevents secretion from ER">
    <location>
        <begin position="506"/>
        <end position="509"/>
    </location>
</feature>
<feature type="active site" description="Nucleophile" evidence="1">
    <location>
        <position position="55"/>
    </location>
</feature>
<feature type="active site" description="Nucleophile" evidence="1">
    <location>
        <position position="58"/>
    </location>
</feature>
<feature type="active site" description="Nucleophile" evidence="1">
    <location>
        <position position="399"/>
    </location>
</feature>
<feature type="active site" description="Nucleophile" evidence="1">
    <location>
        <position position="402"/>
    </location>
</feature>
<feature type="site" description="Contributes to redox potential value" evidence="1">
    <location>
        <position position="56"/>
    </location>
</feature>
<feature type="site" description="Contributes to redox potential value" evidence="1">
    <location>
        <position position="57"/>
    </location>
</feature>
<feature type="site" description="Lowers pKa of C-terminal Cys of first active site" evidence="1">
    <location>
        <position position="122"/>
    </location>
</feature>
<feature type="site" description="Contributes to redox potential value" evidence="1">
    <location>
        <position position="400"/>
    </location>
</feature>
<feature type="site" description="Contributes to redox potential value" evidence="1">
    <location>
        <position position="401"/>
    </location>
</feature>
<feature type="site" description="Lowers pKa of C-terminal Cys of second active site" evidence="1">
    <location>
        <position position="463"/>
    </location>
</feature>
<feature type="modified residue" description="N6-acetyllysine" evidence="3">
    <location>
        <position position="202"/>
    </location>
</feature>
<feature type="modified residue" description="N6-succinyllysine" evidence="3">
    <location>
        <position position="224"/>
    </location>
</feature>
<feature type="modified residue" description="N6-succinyllysine" evidence="3">
    <location>
        <position position="273"/>
    </location>
</feature>
<feature type="modified residue" description="Phosphoserine" evidence="2">
    <location>
        <position position="333"/>
    </location>
</feature>
<feature type="modified residue" description="Phosphoserine" evidence="2">
    <location>
        <position position="359"/>
    </location>
</feature>
<feature type="modified residue" description="Phosphoserine" evidence="2">
    <location>
        <position position="429"/>
    </location>
</feature>
<feature type="disulfide bond" description="Redox-active" evidence="4">
    <location>
        <begin position="55"/>
        <end position="58"/>
    </location>
</feature>
<feature type="disulfide bond" description="Redox-active" evidence="4">
    <location>
        <begin position="399"/>
        <end position="402"/>
    </location>
</feature>
<feature type="sequence conflict" description="In Ref. 1; CAA26675." evidence="6" ref="1">
    <original>AL</original>
    <variation>P</variation>
    <location>
        <begin position="39"/>
        <end position="40"/>
    </location>
</feature>
<accession>P04785</accession>
<accession>P13700</accession>
<keyword id="KW-0007">Acetylation</keyword>
<keyword id="KW-1003">Cell membrane</keyword>
<keyword id="KW-0143">Chaperone</keyword>
<keyword id="KW-0903">Direct protein sequencing</keyword>
<keyword id="KW-1015">Disulfide bond</keyword>
<keyword id="KW-0256">Endoplasmic reticulum</keyword>
<keyword id="KW-0413">Isomerase</keyword>
<keyword id="KW-0472">Membrane</keyword>
<keyword id="KW-0597">Phosphoprotein</keyword>
<keyword id="KW-0676">Redox-active center</keyword>
<keyword id="KW-1185">Reference proteome</keyword>
<keyword id="KW-0677">Repeat</keyword>
<keyword id="KW-0732">Signal</keyword>
<evidence type="ECO:0000250" key="1"/>
<evidence type="ECO:0000250" key="2">
    <source>
        <dbReference type="UniProtKB" id="P07237"/>
    </source>
</evidence>
<evidence type="ECO:0000250" key="3">
    <source>
        <dbReference type="UniProtKB" id="P09103"/>
    </source>
</evidence>
<evidence type="ECO:0000255" key="4">
    <source>
        <dbReference type="PROSITE-ProRule" id="PRU00691"/>
    </source>
</evidence>
<evidence type="ECO:0000269" key="5">
    <source>
    </source>
</evidence>
<evidence type="ECO:0000305" key="6"/>
<evidence type="ECO:0000305" key="7">
    <source>
    </source>
</evidence>
<dbReference type="EC" id="5.3.4.1" evidence="2"/>
<dbReference type="EMBL" id="M21018">
    <property type="protein sequence ID" value="AAA40620.1"/>
    <property type="molecule type" value="mRNA"/>
</dbReference>
<dbReference type="EMBL" id="BC061857">
    <property type="protein sequence ID" value="AAH61857.1"/>
    <property type="molecule type" value="mRNA"/>
</dbReference>
<dbReference type="EMBL" id="X02918">
    <property type="protein sequence ID" value="CAA26675.1"/>
    <property type="molecule type" value="mRNA"/>
</dbReference>
<dbReference type="EMBL" id="M21476">
    <property type="protein sequence ID" value="AAA40619.1"/>
    <property type="molecule type" value="mRNA"/>
</dbReference>
<dbReference type="PIR" id="A24595">
    <property type="entry name" value="ISRTSS"/>
</dbReference>
<dbReference type="PIR" id="S68028">
    <property type="entry name" value="S68028"/>
</dbReference>
<dbReference type="RefSeq" id="NP_037130.2">
    <property type="nucleotide sequence ID" value="NM_012998.2"/>
</dbReference>
<dbReference type="SMR" id="P04785"/>
<dbReference type="BioGRID" id="247538">
    <property type="interactions" value="3"/>
</dbReference>
<dbReference type="FunCoup" id="P04785">
    <property type="interactions" value="2488"/>
</dbReference>
<dbReference type="IntAct" id="P04785">
    <property type="interactions" value="8"/>
</dbReference>
<dbReference type="MINT" id="P04785"/>
<dbReference type="STRING" id="10116.ENSRNOP00000051841"/>
<dbReference type="GlyGen" id="P04785">
    <property type="glycosylation" value="1 site, 1 O-linked glycan (1 site)"/>
</dbReference>
<dbReference type="iPTMnet" id="P04785"/>
<dbReference type="PhosphoSitePlus" id="P04785"/>
<dbReference type="jPOST" id="P04785"/>
<dbReference type="PaxDb" id="10116-ENSRNOP00000051841"/>
<dbReference type="Ensembl" id="ENSRNOT00000054958.3">
    <property type="protein sequence ID" value="ENSRNOP00000051841.1"/>
    <property type="gene ID" value="ENSRNOG00000036689.3"/>
</dbReference>
<dbReference type="GeneID" id="25506"/>
<dbReference type="KEGG" id="rno:25506"/>
<dbReference type="AGR" id="RGD:3244"/>
<dbReference type="CTD" id="5034"/>
<dbReference type="RGD" id="3244">
    <property type="gene designation" value="P4hb"/>
</dbReference>
<dbReference type="eggNOG" id="KOG0190">
    <property type="taxonomic scope" value="Eukaryota"/>
</dbReference>
<dbReference type="GeneTree" id="ENSGT00940000157351"/>
<dbReference type="HOGENOM" id="CLU_025879_1_0_1"/>
<dbReference type="InParanoid" id="P04785"/>
<dbReference type="OMA" id="FFGMKKD"/>
<dbReference type="OrthoDB" id="72053at2759"/>
<dbReference type="PhylomeDB" id="P04785"/>
<dbReference type="TreeFam" id="TF106381"/>
<dbReference type="BRENDA" id="5.3.4.1">
    <property type="organism ID" value="5301"/>
</dbReference>
<dbReference type="Reactome" id="R-RNO-1650814">
    <property type="pathway name" value="Collagen biosynthesis and modifying enzymes"/>
</dbReference>
<dbReference type="Reactome" id="R-RNO-264876">
    <property type="pathway name" value="Insulin processing"/>
</dbReference>
<dbReference type="Reactome" id="R-RNO-3299685">
    <property type="pathway name" value="Detoxification of Reactive Oxygen Species"/>
</dbReference>
<dbReference type="Reactome" id="R-RNO-381426">
    <property type="pathway name" value="Regulation of Insulin-like Growth Factor (IGF) transport and uptake by Insulin-like Growth Factor Binding Proteins (IGFBPs)"/>
</dbReference>
<dbReference type="Reactome" id="R-RNO-5358346">
    <property type="pathway name" value="Hedgehog ligand biogenesis"/>
</dbReference>
<dbReference type="Reactome" id="R-RNO-8866423">
    <property type="pathway name" value="VLDL assembly"/>
</dbReference>
<dbReference type="Reactome" id="R-RNO-8957275">
    <property type="pathway name" value="Post-translational protein phosphorylation"/>
</dbReference>
<dbReference type="Reactome" id="R-RNO-8963888">
    <property type="pathway name" value="Chylomicron assembly"/>
</dbReference>
<dbReference type="Reactome" id="R-RNO-8964041">
    <property type="pathway name" value="LDL remodeling"/>
</dbReference>
<dbReference type="Reactome" id="R-RNO-9020591">
    <property type="pathway name" value="Interleukin-12 signaling"/>
</dbReference>
<dbReference type="Reactome" id="R-RNO-9020933">
    <property type="pathway name" value="Interleukin-23 signaling"/>
</dbReference>
<dbReference type="PRO" id="PR:P04785"/>
<dbReference type="Proteomes" id="UP000002494">
    <property type="component" value="Chromosome 10"/>
</dbReference>
<dbReference type="Bgee" id="ENSRNOG00000036689">
    <property type="expression patterns" value="Expressed in jejunum and 20 other cell types or tissues"/>
</dbReference>
<dbReference type="GO" id="GO:0005856">
    <property type="term" value="C:cytoskeleton"/>
    <property type="evidence" value="ECO:0000266"/>
    <property type="project" value="RGD"/>
</dbReference>
<dbReference type="GO" id="GO:0005829">
    <property type="term" value="C:cytosol"/>
    <property type="evidence" value="ECO:0000266"/>
    <property type="project" value="RGD"/>
</dbReference>
<dbReference type="GO" id="GO:0005783">
    <property type="term" value="C:endoplasmic reticulum"/>
    <property type="evidence" value="ECO:0000250"/>
    <property type="project" value="UniProtKB"/>
</dbReference>
<dbReference type="GO" id="GO:0034663">
    <property type="term" value="C:endoplasmic reticulum chaperone complex"/>
    <property type="evidence" value="ECO:0000266"/>
    <property type="project" value="RGD"/>
</dbReference>
<dbReference type="GO" id="GO:0005788">
    <property type="term" value="C:endoplasmic reticulum lumen"/>
    <property type="evidence" value="ECO:0000266"/>
    <property type="project" value="RGD"/>
</dbReference>
<dbReference type="GO" id="GO:0005793">
    <property type="term" value="C:endoplasmic reticulum-Golgi intermediate compartment"/>
    <property type="evidence" value="ECO:0000266"/>
    <property type="project" value="RGD"/>
</dbReference>
<dbReference type="GO" id="GO:0009897">
    <property type="term" value="C:external side of plasma membrane"/>
    <property type="evidence" value="ECO:0000266"/>
    <property type="project" value="RGD"/>
</dbReference>
<dbReference type="GO" id="GO:0030027">
    <property type="term" value="C:lamellipodium"/>
    <property type="evidence" value="ECO:0000266"/>
    <property type="project" value="RGD"/>
</dbReference>
<dbReference type="GO" id="GO:0042470">
    <property type="term" value="C:melanosome"/>
    <property type="evidence" value="ECO:0007669"/>
    <property type="project" value="UniProtKB-SubCell"/>
</dbReference>
<dbReference type="GO" id="GO:0016222">
    <property type="term" value="C:procollagen-proline 4-dioxygenase complex"/>
    <property type="evidence" value="ECO:0000266"/>
    <property type="project" value="RGD"/>
</dbReference>
<dbReference type="GO" id="GO:0032991">
    <property type="term" value="C:protein-containing complex"/>
    <property type="evidence" value="ECO:0000266"/>
    <property type="project" value="RGD"/>
</dbReference>
<dbReference type="GO" id="GO:0003779">
    <property type="term" value="F:actin binding"/>
    <property type="evidence" value="ECO:0000266"/>
    <property type="project" value="RGD"/>
</dbReference>
<dbReference type="GO" id="GO:0019899">
    <property type="term" value="F:enzyme binding"/>
    <property type="evidence" value="ECO:0000353"/>
    <property type="project" value="RGD"/>
</dbReference>
<dbReference type="GO" id="GO:0005178">
    <property type="term" value="F:integrin binding"/>
    <property type="evidence" value="ECO:0000266"/>
    <property type="project" value="RGD"/>
</dbReference>
<dbReference type="GO" id="GO:0004656">
    <property type="term" value="F:procollagen-proline 4-dioxygenase activity"/>
    <property type="evidence" value="ECO:0007669"/>
    <property type="project" value="Ensembl"/>
</dbReference>
<dbReference type="GO" id="GO:0003756">
    <property type="term" value="F:protein disulfide isomerase activity"/>
    <property type="evidence" value="ECO:0000315"/>
    <property type="project" value="RGD"/>
</dbReference>
<dbReference type="GO" id="GO:0046982">
    <property type="term" value="F:protein heterodimerization activity"/>
    <property type="evidence" value="ECO:0000266"/>
    <property type="project" value="RGD"/>
</dbReference>
<dbReference type="GO" id="GO:0044877">
    <property type="term" value="F:protein-containing complex binding"/>
    <property type="evidence" value="ECO:0000353"/>
    <property type="project" value="RGD"/>
</dbReference>
<dbReference type="GO" id="GO:0015035">
    <property type="term" value="F:protein-disulfide reductase activity"/>
    <property type="evidence" value="ECO:0000266"/>
    <property type="project" value="RGD"/>
</dbReference>
<dbReference type="GO" id="GO:0016972">
    <property type="term" value="F:thiol oxidase activity"/>
    <property type="evidence" value="ECO:0000266"/>
    <property type="project" value="RGD"/>
</dbReference>
<dbReference type="GO" id="GO:0071456">
    <property type="term" value="P:cellular response to hypoxia"/>
    <property type="evidence" value="ECO:0000266"/>
    <property type="project" value="RGD"/>
</dbReference>
<dbReference type="GO" id="GO:0098761">
    <property type="term" value="P:cellular response to interleukin-7"/>
    <property type="evidence" value="ECO:0000266"/>
    <property type="project" value="RGD"/>
</dbReference>
<dbReference type="GO" id="GO:0006888">
    <property type="term" value="P:endoplasmic reticulum to Golgi vesicle-mediated transport"/>
    <property type="evidence" value="ECO:0000266"/>
    <property type="project" value="RGD"/>
</dbReference>
<dbReference type="GO" id="GO:0030070">
    <property type="term" value="P:insulin processing"/>
    <property type="evidence" value="ECO:0000266"/>
    <property type="project" value="RGD"/>
</dbReference>
<dbReference type="GO" id="GO:0045785">
    <property type="term" value="P:positive regulation of cell adhesion"/>
    <property type="evidence" value="ECO:0000266"/>
    <property type="project" value="RGD"/>
</dbReference>
<dbReference type="GO" id="GO:1900026">
    <property type="term" value="P:positive regulation of substrate adhesion-dependent cell spreading"/>
    <property type="evidence" value="ECO:0000266"/>
    <property type="project" value="RGD"/>
</dbReference>
<dbReference type="GO" id="GO:2000406">
    <property type="term" value="P:positive regulation of T cell migration"/>
    <property type="evidence" value="ECO:0000266"/>
    <property type="project" value="RGD"/>
</dbReference>
<dbReference type="GO" id="GO:0046598">
    <property type="term" value="P:positive regulation of viral entry into host cell"/>
    <property type="evidence" value="ECO:0000266"/>
    <property type="project" value="RGD"/>
</dbReference>
<dbReference type="GO" id="GO:0006457">
    <property type="term" value="P:protein folding"/>
    <property type="evidence" value="ECO:0000318"/>
    <property type="project" value="GO_Central"/>
</dbReference>
<dbReference type="GO" id="GO:0034975">
    <property type="term" value="P:protein folding in endoplasmic reticulum"/>
    <property type="evidence" value="ECO:0000266"/>
    <property type="project" value="RGD"/>
</dbReference>
<dbReference type="GO" id="GO:1902175">
    <property type="term" value="P:regulation of oxidative stress-induced intrinsic apoptotic signaling pathway"/>
    <property type="evidence" value="ECO:0000266"/>
    <property type="project" value="RGD"/>
</dbReference>
<dbReference type="GO" id="GO:0034976">
    <property type="term" value="P:response to endoplasmic reticulum stress"/>
    <property type="evidence" value="ECO:0000266"/>
    <property type="project" value="RGD"/>
</dbReference>
<dbReference type="CDD" id="cd02961">
    <property type="entry name" value="PDI_a_family"/>
    <property type="match status" value="1"/>
</dbReference>
<dbReference type="CDD" id="cd02995">
    <property type="entry name" value="PDI_a_PDI_a'_C"/>
    <property type="match status" value="1"/>
</dbReference>
<dbReference type="CDD" id="cd02982">
    <property type="entry name" value="PDI_b'_family"/>
    <property type="match status" value="1"/>
</dbReference>
<dbReference type="CDD" id="cd02981">
    <property type="entry name" value="PDI_b_family"/>
    <property type="match status" value="1"/>
</dbReference>
<dbReference type="FunFam" id="3.40.30.10:FF:000023">
    <property type="entry name" value="Protein disulfide-isomerase"/>
    <property type="match status" value="1"/>
</dbReference>
<dbReference type="FunFam" id="3.40.30.10:FF:000030">
    <property type="entry name" value="Protein disulfide-isomerase"/>
    <property type="match status" value="1"/>
</dbReference>
<dbReference type="FunFam" id="3.40.30.10:FF:000110">
    <property type="entry name" value="Protein disulfide-isomerase"/>
    <property type="match status" value="1"/>
</dbReference>
<dbReference type="FunFam" id="3.40.30.10:FF:000027">
    <property type="entry name" value="protein disulfide-isomerase A2"/>
    <property type="match status" value="1"/>
</dbReference>
<dbReference type="Gene3D" id="3.40.30.10">
    <property type="entry name" value="Glutaredoxin"/>
    <property type="match status" value="4"/>
</dbReference>
<dbReference type="InterPro" id="IPR005788">
    <property type="entry name" value="PDI_thioredoxin-like_dom"/>
</dbReference>
<dbReference type="InterPro" id="IPR005792">
    <property type="entry name" value="Prot_disulphide_isomerase"/>
</dbReference>
<dbReference type="InterPro" id="IPR036249">
    <property type="entry name" value="Thioredoxin-like_sf"/>
</dbReference>
<dbReference type="InterPro" id="IPR017937">
    <property type="entry name" value="Thioredoxin_CS"/>
</dbReference>
<dbReference type="InterPro" id="IPR013766">
    <property type="entry name" value="Thioredoxin_domain"/>
</dbReference>
<dbReference type="NCBIfam" id="TIGR01130">
    <property type="entry name" value="ER_PDI_fam"/>
    <property type="match status" value="1"/>
</dbReference>
<dbReference type="NCBIfam" id="TIGR01126">
    <property type="entry name" value="pdi_dom"/>
    <property type="match status" value="2"/>
</dbReference>
<dbReference type="PANTHER" id="PTHR18929">
    <property type="entry name" value="PROTEIN DISULFIDE ISOMERASE"/>
    <property type="match status" value="1"/>
</dbReference>
<dbReference type="PANTHER" id="PTHR18929:SF101">
    <property type="entry name" value="PROTEIN DISULFIDE-ISOMERASE"/>
    <property type="match status" value="1"/>
</dbReference>
<dbReference type="Pfam" id="PF00085">
    <property type="entry name" value="Thioredoxin"/>
    <property type="match status" value="2"/>
</dbReference>
<dbReference type="Pfam" id="PF13848">
    <property type="entry name" value="Thioredoxin_6"/>
    <property type="match status" value="1"/>
</dbReference>
<dbReference type="PRINTS" id="PR00421">
    <property type="entry name" value="THIOREDOXIN"/>
</dbReference>
<dbReference type="SUPFAM" id="SSF52833">
    <property type="entry name" value="Thioredoxin-like"/>
    <property type="match status" value="4"/>
</dbReference>
<dbReference type="PROSITE" id="PS00014">
    <property type="entry name" value="ER_TARGET"/>
    <property type="match status" value="1"/>
</dbReference>
<dbReference type="PROSITE" id="PS00194">
    <property type="entry name" value="THIOREDOXIN_1"/>
    <property type="match status" value="2"/>
</dbReference>
<dbReference type="PROSITE" id="PS51352">
    <property type="entry name" value="THIOREDOXIN_2"/>
    <property type="match status" value="2"/>
</dbReference>
<proteinExistence type="evidence at protein level"/>
<comment type="function">
    <text evidence="2">This multifunctional protein catalyzes the formation, breakage and rearrangement of disulfide bonds. At the cell surface, seems to act as a reductase that cleaves disulfide bonds of proteins attached to the cell. May therefore cause structural modifications of exofacial proteins. Inside the cell, seems to form/rearrange disulfide bonds of nascent proteins. At high concentrations and following phosphorylation by FAM20C, functions as a chaperone that inhibits aggregation of misfolded proteins. At low concentrations, facilitates aggregation (anti-chaperone activity). May be involved with other chaperones in the structural modification of the TG precursor in hormone biogenesis. Also acts as a structural subunit of various enzymes such as prolyl 4-hydroxylase and microsomal triacylglycerol transfer protein MTTP. Receptor for LGALS9; the interaction retains P4HB at the cell surface of Th2 T helper cells, increasing disulfide reductase activity at the plasma membrane, altering the plasma membrane redox state and enhancing cell migration.</text>
</comment>
<comment type="catalytic activity">
    <reaction evidence="2">
        <text>Catalyzes the rearrangement of -S-S- bonds in proteins.</text>
        <dbReference type="EC" id="5.3.4.1"/>
    </reaction>
</comment>
<comment type="subunit">
    <text evidence="1 2 3">Heterodimer; heterodimerizes with the protein microsomal triglyceride transfer MTTP. Homodimer. Monomers and homotetramers may also occur. Interacts with P4HA2, forming a heterotetramer consisting of 2 alpha subunits (P4HA2) and 2 beta (P4HB), where P4HB plays the role of a structural subunit; this tetramer catalyzes the formation of 4-hydroxyproline in collagen (By similarity). Also constitutes the structural subunit of the microsomal triacylglycerol transfer protein MTTP in mammalian cells. Stabilizes both enzymes and retain them in the ER without contributing to the catalytic activity. Binds UBQLN1. Interacts with ERO1B. Interacts with ILDR2 (By similarity). Interacts with ERN1/IRE1A (via N-terminus); the interaction is enhanced by phosphorylation of P4HB by FAM20C in response to endoplasmic reticulum stress and results in attenuation of ERN1 activity (By similarity).</text>
</comment>
<comment type="subcellular location">
    <subcellularLocation>
        <location evidence="2">Endoplasmic reticulum</location>
    </subcellularLocation>
    <subcellularLocation>
        <location evidence="2">Endoplasmic reticulum lumen</location>
    </subcellularLocation>
    <subcellularLocation>
        <location evidence="2">Melanosome</location>
    </subcellularLocation>
    <subcellularLocation>
        <location evidence="3">Cell membrane</location>
        <topology evidence="6">Peripheral membrane protein</topology>
    </subcellularLocation>
    <text evidence="2">Highly abundant. In some cell types, seems to be also secreted or associated with the plasma membrane, where it undergoes constant shedding and replacement from intracellular sources. Localizes near CD4-enriched regions on lymphoid cell surfaces. Colocalizes with MTTP in the endoplasmic reticulum.</text>
</comment>
<comment type="PTM">
    <text evidence="2">Phosphorylation of Ser-359 by FAM20C is induced by endoplasmic reticulum stress and results in a functional switch from oxidoreductase to molecular chaperone. It also promotes interaction with ERN1.</text>
</comment>
<comment type="similarity">
    <text evidence="6">Belongs to the protein disulfide isomerase family.</text>
</comment>
<comment type="caution">
    <text evidence="7">Was originally (PubMed:8251535, PubMed:3178809) thought to be identical to thyroxine deiodinase but this was later shown to be incorrect.</text>
</comment>
<gene>
    <name type="primary">P4hb</name>
    <name type="synonym">Pdia1</name>
</gene>